<name>URED3_BRASO</name>
<sequence>MRSPLQSCSASEGRAVEAALSVDHAGGRSVLRRQNVGYPLHVTRGFHLDAARPDLLTLYLQSASGGLYAGDRIALDVSVARDAAFHLTTQAATVVHDGRGIGALQRQTITVDSGAFCAITTDPYVLFPGAELALDTVATVADDAVLCVADGFAVHDPRASGRAFSEFSGRLRVLRPDGHLLLHDAGRVSGDELHGALGPFAAAANLIIVAPPDRLPSVKSLQQAADGCGALAGASRAPNDAGLVLRILAPDGGTLSRATDAAFHVAAAAALGVTLSRRRK</sequence>
<protein>
    <recommendedName>
        <fullName evidence="1">Urease accessory protein UreD 3</fullName>
    </recommendedName>
</protein>
<comment type="function">
    <text evidence="1">Required for maturation of urease via the functional incorporation of the urease nickel metallocenter.</text>
</comment>
<comment type="subunit">
    <text evidence="1">UreD, UreF and UreG form a complex that acts as a GTP-hydrolysis-dependent molecular chaperone, activating the urease apoprotein by helping to assemble the nickel containing metallocenter of UreC. The UreE protein probably delivers the nickel.</text>
</comment>
<comment type="subcellular location">
    <subcellularLocation>
        <location evidence="1">Cytoplasm</location>
    </subcellularLocation>
</comment>
<comment type="similarity">
    <text evidence="1">Belongs to the UreD family.</text>
</comment>
<evidence type="ECO:0000255" key="1">
    <source>
        <dbReference type="HAMAP-Rule" id="MF_01384"/>
    </source>
</evidence>
<keyword id="KW-0143">Chaperone</keyword>
<keyword id="KW-0963">Cytoplasm</keyword>
<keyword id="KW-0996">Nickel insertion</keyword>
<keyword id="KW-1185">Reference proteome</keyword>
<accession>A4Z049</accession>
<dbReference type="EMBL" id="CU234118">
    <property type="protein sequence ID" value="CAL79525.1"/>
    <property type="molecule type" value="Genomic_DNA"/>
</dbReference>
<dbReference type="RefSeq" id="WP_012029427.1">
    <property type="nucleotide sequence ID" value="NC_009445.1"/>
</dbReference>
<dbReference type="SMR" id="A4Z049"/>
<dbReference type="STRING" id="114615.BRADO5861"/>
<dbReference type="KEGG" id="bra:BRADO5861"/>
<dbReference type="eggNOG" id="COG0829">
    <property type="taxonomic scope" value="Bacteria"/>
</dbReference>
<dbReference type="HOGENOM" id="CLU_056339_1_1_5"/>
<dbReference type="OrthoDB" id="9807968at2"/>
<dbReference type="Proteomes" id="UP000001994">
    <property type="component" value="Chromosome"/>
</dbReference>
<dbReference type="GO" id="GO:0005737">
    <property type="term" value="C:cytoplasm"/>
    <property type="evidence" value="ECO:0007669"/>
    <property type="project" value="UniProtKB-SubCell"/>
</dbReference>
<dbReference type="GO" id="GO:0016151">
    <property type="term" value="F:nickel cation binding"/>
    <property type="evidence" value="ECO:0007669"/>
    <property type="project" value="UniProtKB-UniRule"/>
</dbReference>
<dbReference type="HAMAP" id="MF_01384">
    <property type="entry name" value="UreD"/>
    <property type="match status" value="1"/>
</dbReference>
<dbReference type="InterPro" id="IPR002669">
    <property type="entry name" value="UreD"/>
</dbReference>
<dbReference type="PANTHER" id="PTHR33643">
    <property type="entry name" value="UREASE ACCESSORY PROTEIN D"/>
    <property type="match status" value="1"/>
</dbReference>
<dbReference type="PANTHER" id="PTHR33643:SF1">
    <property type="entry name" value="UREASE ACCESSORY PROTEIN D"/>
    <property type="match status" value="1"/>
</dbReference>
<dbReference type="Pfam" id="PF01774">
    <property type="entry name" value="UreD"/>
    <property type="match status" value="1"/>
</dbReference>
<feature type="chain" id="PRO_0000346557" description="Urease accessory protein UreD 3">
    <location>
        <begin position="1"/>
        <end position="280"/>
    </location>
</feature>
<gene>
    <name evidence="1" type="primary">ureD3</name>
    <name type="ordered locus">BRADO5861</name>
</gene>
<organism>
    <name type="scientific">Bradyrhizobium sp. (strain ORS 278)</name>
    <dbReference type="NCBI Taxonomy" id="114615"/>
    <lineage>
        <taxon>Bacteria</taxon>
        <taxon>Pseudomonadati</taxon>
        <taxon>Pseudomonadota</taxon>
        <taxon>Alphaproteobacteria</taxon>
        <taxon>Hyphomicrobiales</taxon>
        <taxon>Nitrobacteraceae</taxon>
        <taxon>Bradyrhizobium</taxon>
    </lineage>
</organism>
<proteinExistence type="inferred from homology"/>
<reference key="1">
    <citation type="journal article" date="2007" name="Science">
        <title>Legumes symbioses: absence of nod genes in photosynthetic bradyrhizobia.</title>
        <authorList>
            <person name="Giraud E."/>
            <person name="Moulin L."/>
            <person name="Vallenet D."/>
            <person name="Barbe V."/>
            <person name="Cytryn E."/>
            <person name="Avarre J.-C."/>
            <person name="Jaubert M."/>
            <person name="Simon D."/>
            <person name="Cartieaux F."/>
            <person name="Prin Y."/>
            <person name="Bena G."/>
            <person name="Hannibal L."/>
            <person name="Fardoux J."/>
            <person name="Kojadinovic M."/>
            <person name="Vuillet L."/>
            <person name="Lajus A."/>
            <person name="Cruveiller S."/>
            <person name="Rouy Z."/>
            <person name="Mangenot S."/>
            <person name="Segurens B."/>
            <person name="Dossat C."/>
            <person name="Franck W.L."/>
            <person name="Chang W.-S."/>
            <person name="Saunders E."/>
            <person name="Bruce D."/>
            <person name="Richardson P."/>
            <person name="Normand P."/>
            <person name="Dreyfus B."/>
            <person name="Pignol D."/>
            <person name="Stacey G."/>
            <person name="Emerich D."/>
            <person name="Vermeglio A."/>
            <person name="Medigue C."/>
            <person name="Sadowsky M."/>
        </authorList>
    </citation>
    <scope>NUCLEOTIDE SEQUENCE [LARGE SCALE GENOMIC DNA]</scope>
    <source>
        <strain>ORS 278</strain>
    </source>
</reference>